<reference key="1">
    <citation type="journal article" date="2000" name="DNA Res.">
        <title>Structural analysis of Arabidopsis thaliana chromosome 3. I. Sequence features of the regions of 4,504,864 bp covered by sixty P1 and TAC clones.</title>
        <authorList>
            <person name="Sato S."/>
            <person name="Nakamura Y."/>
            <person name="Kaneko T."/>
            <person name="Katoh T."/>
            <person name="Asamizu E."/>
            <person name="Tabata S."/>
        </authorList>
    </citation>
    <scope>NUCLEOTIDE SEQUENCE [LARGE SCALE GENOMIC DNA]</scope>
    <source>
        <strain>cv. Columbia</strain>
    </source>
</reference>
<reference key="2">
    <citation type="journal article" date="2017" name="Plant J.">
        <title>Araport11: a complete reannotation of the Arabidopsis thaliana reference genome.</title>
        <authorList>
            <person name="Cheng C.Y."/>
            <person name="Krishnakumar V."/>
            <person name="Chan A.P."/>
            <person name="Thibaud-Nissen F."/>
            <person name="Schobel S."/>
            <person name="Town C.D."/>
        </authorList>
    </citation>
    <scope>GENOME REANNOTATION</scope>
    <source>
        <strain>cv. Columbia</strain>
    </source>
</reference>
<reference key="3">
    <citation type="journal article" date="2003" name="Science">
        <title>Empirical analysis of transcriptional activity in the Arabidopsis genome.</title>
        <authorList>
            <person name="Yamada K."/>
            <person name="Lim J."/>
            <person name="Dale J.M."/>
            <person name="Chen H."/>
            <person name="Shinn P."/>
            <person name="Palm C.J."/>
            <person name="Southwick A.M."/>
            <person name="Wu H.C."/>
            <person name="Kim C.J."/>
            <person name="Nguyen M."/>
            <person name="Pham P.K."/>
            <person name="Cheuk R.F."/>
            <person name="Karlin-Newmann G."/>
            <person name="Liu S.X."/>
            <person name="Lam B."/>
            <person name="Sakano H."/>
            <person name="Wu T."/>
            <person name="Yu G."/>
            <person name="Miranda M."/>
            <person name="Quach H.L."/>
            <person name="Tripp M."/>
            <person name="Chang C.H."/>
            <person name="Lee J.M."/>
            <person name="Toriumi M.J."/>
            <person name="Chan M.M."/>
            <person name="Tang C.C."/>
            <person name="Onodera C.S."/>
            <person name="Deng J.M."/>
            <person name="Akiyama K."/>
            <person name="Ansari Y."/>
            <person name="Arakawa T."/>
            <person name="Banh J."/>
            <person name="Banno F."/>
            <person name="Bowser L."/>
            <person name="Brooks S.Y."/>
            <person name="Carninci P."/>
            <person name="Chao Q."/>
            <person name="Choy N."/>
            <person name="Enju A."/>
            <person name="Goldsmith A.D."/>
            <person name="Gurjal M."/>
            <person name="Hansen N.F."/>
            <person name="Hayashizaki Y."/>
            <person name="Johnson-Hopson C."/>
            <person name="Hsuan V.W."/>
            <person name="Iida K."/>
            <person name="Karnes M."/>
            <person name="Khan S."/>
            <person name="Koesema E."/>
            <person name="Ishida J."/>
            <person name="Jiang P.X."/>
            <person name="Jones T."/>
            <person name="Kawai J."/>
            <person name="Kamiya A."/>
            <person name="Meyers C."/>
            <person name="Nakajima M."/>
            <person name="Narusaka M."/>
            <person name="Seki M."/>
            <person name="Sakurai T."/>
            <person name="Satou M."/>
            <person name="Tamse R."/>
            <person name="Vaysberg M."/>
            <person name="Wallender E.K."/>
            <person name="Wong C."/>
            <person name="Yamamura Y."/>
            <person name="Yuan S."/>
            <person name="Shinozaki K."/>
            <person name="Davis R.W."/>
            <person name="Theologis A."/>
            <person name="Ecker J.R."/>
        </authorList>
    </citation>
    <scope>NUCLEOTIDE SEQUENCE [LARGE SCALE MRNA]</scope>
    <source>
        <strain>cv. Columbia</strain>
    </source>
</reference>
<reference key="4">
    <citation type="journal article" date="2002" name="Mol. Biol. Cell">
        <title>CASP, the alternatively spliced product of the gene encoding the CCAAT-displacement protein transcription factor, is a Golgi membrane protein related to giantin.</title>
        <authorList>
            <person name="Gillingham A.K."/>
            <person name="Pfeifer A.C."/>
            <person name="Munro S."/>
        </authorList>
    </citation>
    <scope>IDENTIFICATION</scope>
</reference>
<reference key="5">
    <citation type="journal article" date="2005" name="Plant Mol. Biol.">
        <title>Identification and characterization of AtCASP, a plant transmembrane Golgi matrix protein.</title>
        <authorList>
            <person name="Renna L."/>
            <person name="Hanton S.L."/>
            <person name="Stefano G."/>
            <person name="Bortolotti L."/>
            <person name="Misra V."/>
            <person name="Brandizzi F."/>
        </authorList>
    </citation>
    <scope>SUBCELLULAR LOCATION</scope>
    <scope>TOPOLOGY</scope>
    <scope>MUTAGENESIS OF TYR-648</scope>
</reference>
<reference key="6">
    <citation type="journal article" date="2009" name="J. Proteomics">
        <title>Phosphoproteomic analysis of nuclei-enriched fractions from Arabidopsis thaliana.</title>
        <authorList>
            <person name="Jones A.M.E."/>
            <person name="MacLean D."/>
            <person name="Studholme D.J."/>
            <person name="Serna-Sanz A."/>
            <person name="Andreasson E."/>
            <person name="Rathjen J.P."/>
            <person name="Peck S.C."/>
        </authorList>
    </citation>
    <scope>IDENTIFICATION BY MASS SPECTROMETRY [LARGE SCALE ANALYSIS]</scope>
    <source>
        <strain>cv. Columbia</strain>
    </source>
</reference>
<reference key="7">
    <citation type="journal article" date="2009" name="Plant Physiol.">
        <title>Large-scale Arabidopsis phosphoproteome profiling reveals novel chloroplast kinase substrates and phosphorylation networks.</title>
        <authorList>
            <person name="Reiland S."/>
            <person name="Messerli G."/>
            <person name="Baerenfaller K."/>
            <person name="Gerrits B."/>
            <person name="Endler A."/>
            <person name="Grossmann J."/>
            <person name="Gruissem W."/>
            <person name="Baginsky S."/>
        </authorList>
    </citation>
    <scope>IDENTIFICATION BY MASS SPECTROMETRY [LARGE SCALE ANALYSIS]</scope>
</reference>
<reference key="8">
    <citation type="journal article" date="2012" name="Mol. Cell. Proteomics">
        <title>Comparative large-scale characterisation of plant vs. mammal proteins reveals similar and idiosyncratic N-alpha acetylation features.</title>
        <authorList>
            <person name="Bienvenut W.V."/>
            <person name="Sumpton D."/>
            <person name="Martinez A."/>
            <person name="Lilla S."/>
            <person name="Espagne C."/>
            <person name="Meinnel T."/>
            <person name="Giglione C."/>
        </authorList>
    </citation>
    <scope>ACETYLATION [LARGE SCALE ANALYSIS] AT MET-1</scope>
    <scope>IDENTIFICATION BY MASS SPECTROMETRY [LARGE SCALE ANALYSIS]</scope>
</reference>
<organism>
    <name type="scientific">Arabidopsis thaliana</name>
    <name type="common">Mouse-ear cress</name>
    <dbReference type="NCBI Taxonomy" id="3702"/>
    <lineage>
        <taxon>Eukaryota</taxon>
        <taxon>Viridiplantae</taxon>
        <taxon>Streptophyta</taxon>
        <taxon>Embryophyta</taxon>
        <taxon>Tracheophyta</taxon>
        <taxon>Spermatophyta</taxon>
        <taxon>Magnoliopsida</taxon>
        <taxon>eudicotyledons</taxon>
        <taxon>Gunneridae</taxon>
        <taxon>Pentapetalae</taxon>
        <taxon>rosids</taxon>
        <taxon>malvids</taxon>
        <taxon>Brassicales</taxon>
        <taxon>Brassicaceae</taxon>
        <taxon>Camelineae</taxon>
        <taxon>Arabidopsis</taxon>
    </lineage>
</organism>
<evidence type="ECO:0000250" key="1"/>
<evidence type="ECO:0000255" key="2"/>
<evidence type="ECO:0000256" key="3">
    <source>
        <dbReference type="SAM" id="MobiDB-lite"/>
    </source>
</evidence>
<evidence type="ECO:0000269" key="4">
    <source>
    </source>
</evidence>
<evidence type="ECO:0000305" key="5"/>
<evidence type="ECO:0007744" key="6">
    <source>
    </source>
</evidence>
<gene>
    <name type="primary">CASP</name>
    <name type="ordered locus">At3g18480</name>
    <name type="ORF">MYF24.37</name>
</gene>
<protein>
    <recommendedName>
        <fullName>Protein CASP</fullName>
    </recommendedName>
</protein>
<keyword id="KW-0007">Acetylation</keyword>
<keyword id="KW-0175">Coiled coil</keyword>
<keyword id="KW-0333">Golgi apparatus</keyword>
<keyword id="KW-0472">Membrane</keyword>
<keyword id="KW-1185">Reference proteome</keyword>
<keyword id="KW-0812">Transmembrane</keyword>
<keyword id="KW-1133">Transmembrane helix</keyword>
<keyword id="KW-0813">Transport</keyword>
<dbReference type="EMBL" id="AB026658">
    <property type="protein sequence ID" value="BAB01114.1"/>
    <property type="status" value="ALT_SEQ"/>
    <property type="molecule type" value="Genomic_DNA"/>
</dbReference>
<dbReference type="EMBL" id="CP002686">
    <property type="protein sequence ID" value="AEE76102.1"/>
    <property type="molecule type" value="Genomic_DNA"/>
</dbReference>
<dbReference type="EMBL" id="AY056225">
    <property type="protein sequence ID" value="AAL07074.1"/>
    <property type="molecule type" value="mRNA"/>
</dbReference>
<dbReference type="EMBL" id="AY142680">
    <property type="protein sequence ID" value="AAN13218.1"/>
    <property type="molecule type" value="mRNA"/>
</dbReference>
<dbReference type="RefSeq" id="NP_566611.1">
    <property type="nucleotide sequence ID" value="NM_112733.3"/>
</dbReference>
<dbReference type="SMR" id="Q9LS42"/>
<dbReference type="BioGRID" id="6710">
    <property type="interactions" value="14"/>
</dbReference>
<dbReference type="FunCoup" id="Q9LS42">
    <property type="interactions" value="1470"/>
</dbReference>
<dbReference type="IntAct" id="Q9LS42">
    <property type="interactions" value="13"/>
</dbReference>
<dbReference type="STRING" id="3702.Q9LS42"/>
<dbReference type="iPTMnet" id="Q9LS42"/>
<dbReference type="PaxDb" id="3702-AT3G18480.1"/>
<dbReference type="ProteomicsDB" id="223884"/>
<dbReference type="EnsemblPlants" id="AT3G18480.1">
    <property type="protein sequence ID" value="AT3G18480.1"/>
    <property type="gene ID" value="AT3G18480"/>
</dbReference>
<dbReference type="GeneID" id="821377"/>
<dbReference type="Gramene" id="AT3G18480.1">
    <property type="protein sequence ID" value="AT3G18480.1"/>
    <property type="gene ID" value="AT3G18480"/>
</dbReference>
<dbReference type="KEGG" id="ath:AT3G18480"/>
<dbReference type="Araport" id="AT3G18480"/>
<dbReference type="TAIR" id="AT3G18480">
    <property type="gene designation" value="CASP"/>
</dbReference>
<dbReference type="eggNOG" id="KOG0963">
    <property type="taxonomic scope" value="Eukaryota"/>
</dbReference>
<dbReference type="HOGENOM" id="CLU_016758_0_0_1"/>
<dbReference type="InParanoid" id="Q9LS42"/>
<dbReference type="OMA" id="WQQEGFN"/>
<dbReference type="OrthoDB" id="10257567at2759"/>
<dbReference type="PhylomeDB" id="Q9LS42"/>
<dbReference type="PRO" id="PR:Q9LS42"/>
<dbReference type="Proteomes" id="UP000006548">
    <property type="component" value="Chromosome 3"/>
</dbReference>
<dbReference type="ExpressionAtlas" id="Q9LS42">
    <property type="expression patterns" value="baseline and differential"/>
</dbReference>
<dbReference type="GO" id="GO:0005768">
    <property type="term" value="C:endosome"/>
    <property type="evidence" value="ECO:0007005"/>
    <property type="project" value="TAIR"/>
</dbReference>
<dbReference type="GO" id="GO:0005794">
    <property type="term" value="C:Golgi apparatus"/>
    <property type="evidence" value="ECO:0000314"/>
    <property type="project" value="TAIR"/>
</dbReference>
<dbReference type="GO" id="GO:0000139">
    <property type="term" value="C:Golgi membrane"/>
    <property type="evidence" value="ECO:0007669"/>
    <property type="project" value="UniProtKB-SubCell"/>
</dbReference>
<dbReference type="GO" id="GO:0005802">
    <property type="term" value="C:trans-Golgi network"/>
    <property type="evidence" value="ECO:0007005"/>
    <property type="project" value="TAIR"/>
</dbReference>
<dbReference type="GO" id="GO:0006891">
    <property type="term" value="P:intra-Golgi vesicle-mediated transport"/>
    <property type="evidence" value="ECO:0007669"/>
    <property type="project" value="InterPro"/>
</dbReference>
<dbReference type="InterPro" id="IPR012955">
    <property type="entry name" value="CASP_C"/>
</dbReference>
<dbReference type="PANTHER" id="PTHR14043">
    <property type="entry name" value="CCAAT DISPLACEMENT PROTEIN-RELATED"/>
    <property type="match status" value="1"/>
</dbReference>
<dbReference type="PANTHER" id="PTHR14043:SF2">
    <property type="entry name" value="HOMEOBOX PROTEIN CUT"/>
    <property type="match status" value="1"/>
</dbReference>
<dbReference type="Pfam" id="PF08172">
    <property type="entry name" value="CASP_C"/>
    <property type="match status" value="1"/>
</dbReference>
<dbReference type="Pfam" id="PF25398">
    <property type="entry name" value="CUX1_N"/>
    <property type="match status" value="1"/>
</dbReference>
<proteinExistence type="evidence at protein level"/>
<feature type="chain" id="PRO_0000071794" description="Protein CASP">
    <location>
        <begin position="1"/>
        <end position="689"/>
    </location>
</feature>
<feature type="topological domain" description="Cytoplasmic" evidence="2">
    <location>
        <begin position="1"/>
        <end position="643"/>
    </location>
</feature>
<feature type="transmembrane region" description="Helical; Anchor for type IV membrane protein" evidence="2">
    <location>
        <begin position="644"/>
        <end position="661"/>
    </location>
</feature>
<feature type="topological domain" description="Lumenal" evidence="2">
    <location>
        <begin position="662"/>
        <end position="689"/>
    </location>
</feature>
<feature type="region of interest" description="Disordered" evidence="3">
    <location>
        <begin position="1"/>
        <end position="27"/>
    </location>
</feature>
<feature type="region of interest" description="Disordered" evidence="3">
    <location>
        <begin position="49"/>
        <end position="76"/>
    </location>
</feature>
<feature type="region of interest" description="Disordered" evidence="3">
    <location>
        <begin position="278"/>
        <end position="307"/>
    </location>
</feature>
<feature type="coiled-coil region" evidence="2">
    <location>
        <begin position="79"/>
        <end position="367"/>
    </location>
</feature>
<feature type="coiled-coil region" evidence="2">
    <location>
        <begin position="410"/>
        <end position="467"/>
    </location>
</feature>
<feature type="coiled-coil region" evidence="2">
    <location>
        <begin position="514"/>
        <end position="556"/>
    </location>
</feature>
<feature type="compositionally biased region" description="Basic and acidic residues" evidence="3">
    <location>
        <begin position="65"/>
        <end position="76"/>
    </location>
</feature>
<feature type="modified residue" description="N-acetylmethionine" evidence="6">
    <location>
        <position position="1"/>
    </location>
</feature>
<feature type="mutagenesis site" description="No effect on subcellular location when expressed in tobacco cells; retained in the endoplasmic reticulum when expressed in mammalian cells." evidence="4">
    <original>Y</original>
    <variation>L</variation>
    <location>
        <position position="648"/>
    </location>
</feature>
<accession>Q9LS42</accession>
<accession>Q93ZW7</accession>
<comment type="function">
    <text evidence="1">May be involved in intra-Golgi transport.</text>
</comment>
<comment type="subcellular location">
    <subcellularLocation>
        <location evidence="4">Golgi apparatus membrane</location>
        <topology evidence="4">Single-pass type IV membrane protein</topology>
    </subcellularLocation>
</comment>
<comment type="similarity">
    <text evidence="5">Belongs to the CASP family.</text>
</comment>
<comment type="sequence caution" evidence="5">
    <conflict type="erroneous gene model prediction">
        <sequence resource="EMBL-CDS" id="BAB01114"/>
    </conflict>
</comment>
<name>CASP_ARATH</name>
<sequence>MEVSQDGSERDKTPPPSSSSSSSSPIPVVTNFWKEFDLEKEKSLLDEQGLRIAENQENSQKNRRKLAESTRDFKKASPENKLSMFNSLLKGYQEEVDNITKRAKFGENAFLNIYQKLYEAPDPFPALASIAEQDRKLSEVESENRKMKVELEEFRTEATHLKNQQATIRRLEERNRQLEQQMEEKIKEVVEIKQRNLAEENQKTMELLKDREQALQDQLRQAKDSVSTMQKLHELAQNQLFELRAQSDEETAGKQSEVSLLMDEVERAQTRLLTLEREKGHLRSQLQTANEDTDNKKSDNIDSNSMLENSLTAKEKIISELNMEIHNVETALANERESHVAEIKKLNSLLNKKDTIIEEMKKELQERPSAKLVDDLRKKVKILQAVGYNSIEAEDWDAATTGEEMSKMESLLLDKNRKMEHEVTQLKVQLSEKASLLEKAEAKGEELTAKVNEQQRLIQKLEDDILKGYGSKERKGALFDEWEFSEAGVAEQSEPMDQKHVPSEQDQSSMLKVICSQRDRFRARLRETEEEIRRLKEKIGFLTDELEKTKADNVKLYGKIRYVQDYNHDKVVSRGSKKYVEDLESGFSSDVESKYKKIYEDDINPFAAFSKKEREQRIKDLGIRDRITLSSGRFLLGNKYARTFAFFYTIGLHVLVFTCLYRMSAYSYLSHGAEETLMTEATTNLPHGL</sequence>